<dbReference type="EMBL" id="D14530">
    <property type="protein sequence ID" value="BAA03400.1"/>
    <property type="molecule type" value="mRNA"/>
</dbReference>
<dbReference type="EMBL" id="CR456996">
    <property type="protein sequence ID" value="CAG33277.1"/>
    <property type="molecule type" value="mRNA"/>
</dbReference>
<dbReference type="EMBL" id="BC070221">
    <property type="protein sequence ID" value="AAH70221.1"/>
    <property type="molecule type" value="mRNA"/>
</dbReference>
<dbReference type="EMBL" id="AB007158">
    <property type="protein sequence ID" value="BAA25822.1"/>
    <property type="molecule type" value="Genomic_DNA"/>
</dbReference>
<dbReference type="CCDS" id="CCDS47241.1"/>
<dbReference type="PIR" id="S42105">
    <property type="entry name" value="S42105"/>
</dbReference>
<dbReference type="RefSeq" id="NP_001016.1">
    <property type="nucleotide sequence ID" value="NM_001025.5"/>
</dbReference>
<dbReference type="PDB" id="4CXG">
    <property type="method" value="EM"/>
    <property type="resolution" value="8.70 A"/>
    <property type="chains" value="X=1-143"/>
</dbReference>
<dbReference type="PDB" id="4CXH">
    <property type="method" value="EM"/>
    <property type="resolution" value="8.90 A"/>
    <property type="chains" value="X=1-143"/>
</dbReference>
<dbReference type="PDB" id="4UG0">
    <property type="method" value="EM"/>
    <property type="chains" value="SX=1-143"/>
</dbReference>
<dbReference type="PDB" id="4V6X">
    <property type="method" value="EM"/>
    <property type="resolution" value="5.00 A"/>
    <property type="chains" value="AX=1-143"/>
</dbReference>
<dbReference type="PDB" id="5A2Q">
    <property type="method" value="EM"/>
    <property type="resolution" value="3.90 A"/>
    <property type="chains" value="X=1-143"/>
</dbReference>
<dbReference type="PDB" id="5AJ0">
    <property type="method" value="EM"/>
    <property type="resolution" value="3.50 A"/>
    <property type="chains" value="BX=1-143"/>
</dbReference>
<dbReference type="PDB" id="5FLX">
    <property type="method" value="EM"/>
    <property type="resolution" value="3.90 A"/>
    <property type="chains" value="X=1-143"/>
</dbReference>
<dbReference type="PDB" id="5LKS">
    <property type="method" value="EM"/>
    <property type="resolution" value="3.60 A"/>
    <property type="chains" value="SX=1-143"/>
</dbReference>
<dbReference type="PDB" id="5OA3">
    <property type="method" value="EM"/>
    <property type="resolution" value="4.30 A"/>
    <property type="chains" value="X=1-143"/>
</dbReference>
<dbReference type="PDB" id="5T2C">
    <property type="method" value="EM"/>
    <property type="resolution" value="3.60 A"/>
    <property type="chains" value="AD=1-143"/>
</dbReference>
<dbReference type="PDB" id="5VYC">
    <property type="method" value="X-ray"/>
    <property type="resolution" value="6.00 A"/>
    <property type="chains" value="X1/X2/X3/X4/X5/X6=1-143"/>
</dbReference>
<dbReference type="PDB" id="6FEC">
    <property type="method" value="EM"/>
    <property type="resolution" value="6.30 A"/>
    <property type="chains" value="Q=1-142"/>
</dbReference>
<dbReference type="PDB" id="6G18">
    <property type="method" value="EM"/>
    <property type="resolution" value="3.60 A"/>
    <property type="chains" value="X=1-143"/>
</dbReference>
<dbReference type="PDB" id="6G4S">
    <property type="method" value="EM"/>
    <property type="resolution" value="4.00 A"/>
    <property type="chains" value="X=1-143"/>
</dbReference>
<dbReference type="PDB" id="6G4W">
    <property type="method" value="EM"/>
    <property type="resolution" value="4.50 A"/>
    <property type="chains" value="X=1-143"/>
</dbReference>
<dbReference type="PDB" id="6G51">
    <property type="method" value="EM"/>
    <property type="resolution" value="4.10 A"/>
    <property type="chains" value="X=1-143"/>
</dbReference>
<dbReference type="PDB" id="6G53">
    <property type="method" value="EM"/>
    <property type="resolution" value="4.50 A"/>
    <property type="chains" value="X=1-143"/>
</dbReference>
<dbReference type="PDB" id="6G5H">
    <property type="method" value="EM"/>
    <property type="resolution" value="3.60 A"/>
    <property type="chains" value="X=1-143"/>
</dbReference>
<dbReference type="PDB" id="6G5I">
    <property type="method" value="EM"/>
    <property type="resolution" value="3.50 A"/>
    <property type="chains" value="X=1-143"/>
</dbReference>
<dbReference type="PDB" id="6IP5">
    <property type="method" value="EM"/>
    <property type="resolution" value="3.90 A"/>
    <property type="chains" value="3B=1-143"/>
</dbReference>
<dbReference type="PDB" id="6IP6">
    <property type="method" value="EM"/>
    <property type="resolution" value="4.50 A"/>
    <property type="chains" value="3B=1-143"/>
</dbReference>
<dbReference type="PDB" id="6IP8">
    <property type="method" value="EM"/>
    <property type="resolution" value="3.90 A"/>
    <property type="chains" value="3B=1-143"/>
</dbReference>
<dbReference type="PDB" id="6OLE">
    <property type="method" value="EM"/>
    <property type="resolution" value="3.10 A"/>
    <property type="chains" value="SX=2-142"/>
</dbReference>
<dbReference type="PDB" id="6OLF">
    <property type="method" value="EM"/>
    <property type="resolution" value="3.90 A"/>
    <property type="chains" value="SX=2-142"/>
</dbReference>
<dbReference type="PDB" id="6OLG">
    <property type="method" value="EM"/>
    <property type="resolution" value="3.40 A"/>
    <property type="chains" value="BX=2-140"/>
</dbReference>
<dbReference type="PDB" id="6OLI">
    <property type="method" value="EM"/>
    <property type="resolution" value="3.50 A"/>
    <property type="chains" value="SX=2-142"/>
</dbReference>
<dbReference type="PDB" id="6OLZ">
    <property type="method" value="EM"/>
    <property type="resolution" value="3.90 A"/>
    <property type="chains" value="BX=2-140"/>
</dbReference>
<dbReference type="PDB" id="6OM0">
    <property type="method" value="EM"/>
    <property type="resolution" value="3.10 A"/>
    <property type="chains" value="SX=2-142"/>
</dbReference>
<dbReference type="PDB" id="6OM7">
    <property type="method" value="EM"/>
    <property type="resolution" value="3.70 A"/>
    <property type="chains" value="SX=2-142"/>
</dbReference>
<dbReference type="PDB" id="6QZP">
    <property type="method" value="EM"/>
    <property type="resolution" value="2.90 A"/>
    <property type="chains" value="SX=2-142"/>
</dbReference>
<dbReference type="PDB" id="6XA1">
    <property type="method" value="EM"/>
    <property type="resolution" value="2.80 A"/>
    <property type="chains" value="SX=2-140"/>
</dbReference>
<dbReference type="PDB" id="6Y0G">
    <property type="method" value="EM"/>
    <property type="resolution" value="3.20 A"/>
    <property type="chains" value="SX=1-143"/>
</dbReference>
<dbReference type="PDB" id="6Y2L">
    <property type="method" value="EM"/>
    <property type="resolution" value="3.00 A"/>
    <property type="chains" value="SX=1-143"/>
</dbReference>
<dbReference type="PDB" id="6Y57">
    <property type="method" value="EM"/>
    <property type="resolution" value="3.50 A"/>
    <property type="chains" value="SX=1-143"/>
</dbReference>
<dbReference type="PDB" id="6YBW">
    <property type="method" value="EM"/>
    <property type="resolution" value="3.10 A"/>
    <property type="chains" value="E=1-143"/>
</dbReference>
<dbReference type="PDB" id="6Z6L">
    <property type="method" value="EM"/>
    <property type="resolution" value="3.00 A"/>
    <property type="chains" value="SX=1-143"/>
</dbReference>
<dbReference type="PDB" id="6Z6M">
    <property type="method" value="EM"/>
    <property type="resolution" value="3.10 A"/>
    <property type="chains" value="SX=1-143"/>
</dbReference>
<dbReference type="PDB" id="6Z6N">
    <property type="method" value="EM"/>
    <property type="resolution" value="2.90 A"/>
    <property type="chains" value="SX=1-143"/>
</dbReference>
<dbReference type="PDB" id="6ZLW">
    <property type="method" value="EM"/>
    <property type="resolution" value="2.60 A"/>
    <property type="chains" value="X=1-143"/>
</dbReference>
<dbReference type="PDB" id="6ZM7">
    <property type="method" value="EM"/>
    <property type="resolution" value="2.70 A"/>
    <property type="chains" value="SX=1-143"/>
</dbReference>
<dbReference type="PDB" id="6ZME">
    <property type="method" value="EM"/>
    <property type="resolution" value="3.00 A"/>
    <property type="chains" value="SX=1-143"/>
</dbReference>
<dbReference type="PDB" id="6ZMI">
    <property type="method" value="EM"/>
    <property type="resolution" value="2.60 A"/>
    <property type="chains" value="SX=1-143"/>
</dbReference>
<dbReference type="PDB" id="6ZMO">
    <property type="method" value="EM"/>
    <property type="resolution" value="3.10 A"/>
    <property type="chains" value="SX=1-143"/>
</dbReference>
<dbReference type="PDB" id="6ZMT">
    <property type="method" value="EM"/>
    <property type="resolution" value="3.00 A"/>
    <property type="chains" value="X=1-143"/>
</dbReference>
<dbReference type="PDB" id="6ZMW">
    <property type="method" value="EM"/>
    <property type="resolution" value="3.70 A"/>
    <property type="chains" value="E=1-143"/>
</dbReference>
<dbReference type="PDB" id="6ZN5">
    <property type="method" value="EM"/>
    <property type="resolution" value="3.20 A"/>
    <property type="chains" value="X=2-142"/>
</dbReference>
<dbReference type="PDB" id="6ZOJ">
    <property type="method" value="EM"/>
    <property type="resolution" value="2.80 A"/>
    <property type="chains" value="X=1-143"/>
</dbReference>
<dbReference type="PDB" id="6ZOK">
    <property type="method" value="EM"/>
    <property type="resolution" value="2.80 A"/>
    <property type="chains" value="X=1-143"/>
</dbReference>
<dbReference type="PDB" id="6ZON">
    <property type="method" value="EM"/>
    <property type="resolution" value="3.00 A"/>
    <property type="chains" value="j=1-143"/>
</dbReference>
<dbReference type="PDB" id="6ZP4">
    <property type="method" value="EM"/>
    <property type="resolution" value="2.90 A"/>
    <property type="chains" value="j=1-143"/>
</dbReference>
<dbReference type="PDB" id="6ZUO">
    <property type="method" value="EM"/>
    <property type="resolution" value="3.10 A"/>
    <property type="chains" value="X=1-143"/>
</dbReference>
<dbReference type="PDB" id="6ZV6">
    <property type="method" value="EM"/>
    <property type="resolution" value="2.90 A"/>
    <property type="chains" value="X=1-143"/>
</dbReference>
<dbReference type="PDB" id="6ZVH">
    <property type="method" value="EM"/>
    <property type="resolution" value="2.90 A"/>
    <property type="chains" value="X=2-142"/>
</dbReference>
<dbReference type="PDB" id="6ZVJ">
    <property type="method" value="EM"/>
    <property type="resolution" value="3.80 A"/>
    <property type="chains" value="j=2-140"/>
</dbReference>
<dbReference type="PDB" id="6ZXD">
    <property type="method" value="EM"/>
    <property type="resolution" value="3.20 A"/>
    <property type="chains" value="X=1-143"/>
</dbReference>
<dbReference type="PDB" id="6ZXE">
    <property type="method" value="EM"/>
    <property type="resolution" value="3.00 A"/>
    <property type="chains" value="X=1-143"/>
</dbReference>
<dbReference type="PDB" id="6ZXF">
    <property type="method" value="EM"/>
    <property type="resolution" value="3.70 A"/>
    <property type="chains" value="X=1-143"/>
</dbReference>
<dbReference type="PDB" id="6ZXG">
    <property type="method" value="EM"/>
    <property type="resolution" value="2.60 A"/>
    <property type="chains" value="X=1-143"/>
</dbReference>
<dbReference type="PDB" id="6ZXH">
    <property type="method" value="EM"/>
    <property type="resolution" value="2.70 A"/>
    <property type="chains" value="X=1-143"/>
</dbReference>
<dbReference type="PDB" id="7A09">
    <property type="method" value="EM"/>
    <property type="resolution" value="3.50 A"/>
    <property type="chains" value="j=1-143"/>
</dbReference>
<dbReference type="PDB" id="7K5I">
    <property type="method" value="EM"/>
    <property type="resolution" value="2.90 A"/>
    <property type="chains" value="X=1-143"/>
</dbReference>
<dbReference type="PDB" id="7MQ8">
    <property type="method" value="EM"/>
    <property type="resolution" value="3.60 A"/>
    <property type="chains" value="SR=1-143"/>
</dbReference>
<dbReference type="PDB" id="7MQ9">
    <property type="method" value="EM"/>
    <property type="resolution" value="3.87 A"/>
    <property type="chains" value="SR=1-143"/>
</dbReference>
<dbReference type="PDB" id="7MQA">
    <property type="method" value="EM"/>
    <property type="resolution" value="2.70 A"/>
    <property type="chains" value="SR=1-143"/>
</dbReference>
<dbReference type="PDB" id="7QP6">
    <property type="method" value="EM"/>
    <property type="resolution" value="4.70 A"/>
    <property type="chains" value="E=1-143"/>
</dbReference>
<dbReference type="PDB" id="7QP7">
    <property type="method" value="EM"/>
    <property type="resolution" value="3.70 A"/>
    <property type="chains" value="E=1-143"/>
</dbReference>
<dbReference type="PDB" id="7R4X">
    <property type="method" value="EM"/>
    <property type="resolution" value="2.15 A"/>
    <property type="chains" value="X=1-143"/>
</dbReference>
<dbReference type="PDB" id="7TQL">
    <property type="method" value="EM"/>
    <property type="resolution" value="3.40 A"/>
    <property type="chains" value="X=2-142"/>
</dbReference>
<dbReference type="PDB" id="7WTS">
    <property type="method" value="EM"/>
    <property type="resolution" value="3.20 A"/>
    <property type="chains" value="X=1-143"/>
</dbReference>
<dbReference type="PDB" id="7WTT">
    <property type="method" value="EM"/>
    <property type="resolution" value="3.10 A"/>
    <property type="chains" value="X=1-143"/>
</dbReference>
<dbReference type="PDB" id="7WTU">
    <property type="method" value="EM"/>
    <property type="resolution" value="3.00 A"/>
    <property type="chains" value="X=1-143"/>
</dbReference>
<dbReference type="PDB" id="7WTV">
    <property type="method" value="EM"/>
    <property type="resolution" value="3.50 A"/>
    <property type="chains" value="X=1-143"/>
</dbReference>
<dbReference type="PDB" id="7WTW">
    <property type="method" value="EM"/>
    <property type="resolution" value="3.20 A"/>
    <property type="chains" value="X=1-143"/>
</dbReference>
<dbReference type="PDB" id="7WTX">
    <property type="method" value="EM"/>
    <property type="resolution" value="3.10 A"/>
    <property type="chains" value="X=1-143"/>
</dbReference>
<dbReference type="PDB" id="7WTZ">
    <property type="method" value="EM"/>
    <property type="resolution" value="3.00 A"/>
    <property type="chains" value="X=1-143"/>
</dbReference>
<dbReference type="PDB" id="7WU0">
    <property type="method" value="EM"/>
    <property type="resolution" value="3.30 A"/>
    <property type="chains" value="X=1-143"/>
</dbReference>
<dbReference type="PDB" id="7XNX">
    <property type="method" value="EM"/>
    <property type="resolution" value="2.70 A"/>
    <property type="chains" value="SX=1-143"/>
</dbReference>
<dbReference type="PDB" id="7XNY">
    <property type="method" value="EM"/>
    <property type="resolution" value="2.50 A"/>
    <property type="chains" value="SX=1-143"/>
</dbReference>
<dbReference type="PDB" id="8IFD">
    <property type="method" value="EM"/>
    <property type="resolution" value="2.59 A"/>
    <property type="chains" value="3B=1-143"/>
</dbReference>
<dbReference type="PDB" id="8IFE">
    <property type="method" value="EM"/>
    <property type="resolution" value="2.57 A"/>
    <property type="chains" value="3B=1-143"/>
</dbReference>
<dbReference type="PDB" id="8JDJ">
    <property type="method" value="EM"/>
    <property type="resolution" value="2.50 A"/>
    <property type="chains" value="AJ=1-143"/>
</dbReference>
<dbReference type="PDB" id="8JDK">
    <property type="method" value="EM"/>
    <property type="resolution" value="2.26 A"/>
    <property type="chains" value="AJ=1-143"/>
</dbReference>
<dbReference type="PDB" id="8JDL">
    <property type="method" value="EM"/>
    <property type="resolution" value="2.42 A"/>
    <property type="chains" value="AJ=1-143"/>
</dbReference>
<dbReference type="PDB" id="8JDM">
    <property type="method" value="EM"/>
    <property type="resolution" value="2.67 A"/>
    <property type="chains" value="AJ=1-143"/>
</dbReference>
<dbReference type="PDB" id="8K2C">
    <property type="method" value="EM"/>
    <property type="resolution" value="2.40 A"/>
    <property type="chains" value="SX=1-143"/>
</dbReference>
<dbReference type="PDB" id="8OZ0">
    <property type="method" value="EM"/>
    <property type="resolution" value="3.50 A"/>
    <property type="chains" value="a=1-143"/>
</dbReference>
<dbReference type="PDB" id="8PJ1">
    <property type="method" value="EM"/>
    <property type="resolution" value="3.40 A"/>
    <property type="chains" value="E=1-143"/>
</dbReference>
<dbReference type="PDB" id="8PJ2">
    <property type="method" value="EM"/>
    <property type="resolution" value="3.40 A"/>
    <property type="chains" value="E=1-143"/>
</dbReference>
<dbReference type="PDB" id="8PJ3">
    <property type="method" value="EM"/>
    <property type="resolution" value="3.70 A"/>
    <property type="chains" value="E=1-143"/>
</dbReference>
<dbReference type="PDB" id="8PJ4">
    <property type="method" value="EM"/>
    <property type="resolution" value="3.20 A"/>
    <property type="chains" value="E=1-143"/>
</dbReference>
<dbReference type="PDB" id="8PJ5">
    <property type="method" value="EM"/>
    <property type="resolution" value="2.90 A"/>
    <property type="chains" value="E=1-143"/>
</dbReference>
<dbReference type="PDB" id="8PJ6">
    <property type="method" value="EM"/>
    <property type="resolution" value="2.90 A"/>
    <property type="chains" value="E=1-143"/>
</dbReference>
<dbReference type="PDB" id="8PPK">
    <property type="method" value="EM"/>
    <property type="resolution" value="2.98 A"/>
    <property type="chains" value="X=1-143"/>
</dbReference>
<dbReference type="PDB" id="8QOI">
    <property type="method" value="EM"/>
    <property type="resolution" value="1.90 A"/>
    <property type="chains" value="SX=1-143"/>
</dbReference>
<dbReference type="PDB" id="8T4S">
    <property type="method" value="EM"/>
    <property type="resolution" value="2.60 A"/>
    <property type="chains" value="X=1-143"/>
</dbReference>
<dbReference type="PDB" id="8UKB">
    <property type="method" value="EM"/>
    <property type="resolution" value="3.05 A"/>
    <property type="chains" value="SX=2-142"/>
</dbReference>
<dbReference type="PDB" id="8XP2">
    <property type="method" value="EM"/>
    <property type="resolution" value="3.20 A"/>
    <property type="chains" value="SX=1-143"/>
</dbReference>
<dbReference type="PDB" id="8XP3">
    <property type="method" value="EM"/>
    <property type="resolution" value="3.40 A"/>
    <property type="chains" value="SX=1-143"/>
</dbReference>
<dbReference type="PDB" id="8XSX">
    <property type="method" value="EM"/>
    <property type="resolution" value="2.40 A"/>
    <property type="chains" value="SX=1-143"/>
</dbReference>
<dbReference type="PDB" id="8XSY">
    <property type="method" value="EM"/>
    <property type="resolution" value="3.00 A"/>
    <property type="chains" value="SX=1-143"/>
</dbReference>
<dbReference type="PDB" id="8XSZ">
    <property type="method" value="EM"/>
    <property type="resolution" value="3.20 A"/>
    <property type="chains" value="SX=1-143"/>
</dbReference>
<dbReference type="PDB" id="8XXL">
    <property type="method" value="EM"/>
    <property type="resolution" value="2.90 A"/>
    <property type="chains" value="SX=1-143"/>
</dbReference>
<dbReference type="PDB" id="8XXM">
    <property type="method" value="EM"/>
    <property type="resolution" value="3.20 A"/>
    <property type="chains" value="SX=1-143"/>
</dbReference>
<dbReference type="PDB" id="8XXN">
    <property type="method" value="EM"/>
    <property type="resolution" value="3.60 A"/>
    <property type="chains" value="SX=1-143"/>
</dbReference>
<dbReference type="PDB" id="8Y0W">
    <property type="method" value="EM"/>
    <property type="resolution" value="3.40 A"/>
    <property type="chains" value="SX=1-143"/>
</dbReference>
<dbReference type="PDB" id="8Y0X">
    <property type="method" value="EM"/>
    <property type="resolution" value="3.30 A"/>
    <property type="chains" value="SX=1-143"/>
</dbReference>
<dbReference type="PDB" id="8YOO">
    <property type="method" value="EM"/>
    <property type="resolution" value="2.00 A"/>
    <property type="chains" value="SX=1-143"/>
</dbReference>
<dbReference type="PDB" id="8YOP">
    <property type="method" value="EM"/>
    <property type="resolution" value="2.20 A"/>
    <property type="chains" value="SX=1-143"/>
</dbReference>
<dbReference type="PDB" id="8ZDB">
    <property type="method" value="EM"/>
    <property type="resolution" value="3.60 A"/>
    <property type="chains" value="X=1-143"/>
</dbReference>
<dbReference type="PDB" id="8ZDC">
    <property type="method" value="EM"/>
    <property type="resolution" value="3.80 A"/>
    <property type="chains" value="X=1-143"/>
</dbReference>
<dbReference type="PDB" id="8ZDD">
    <property type="method" value="EM"/>
    <property type="resolution" value="3.70 A"/>
    <property type="chains" value="X=1-143"/>
</dbReference>
<dbReference type="PDB" id="9BKD">
    <property type="method" value="EM"/>
    <property type="resolution" value="2.60 A"/>
    <property type="chains" value="E=1-143"/>
</dbReference>
<dbReference type="PDB" id="9BLN">
    <property type="method" value="EM"/>
    <property type="resolution" value="3.90 A"/>
    <property type="chains" value="E=1-143"/>
</dbReference>
<dbReference type="PDB" id="9C3H">
    <property type="method" value="EM"/>
    <property type="resolution" value="2.00 A"/>
    <property type="chains" value="SX=1-143"/>
</dbReference>
<dbReference type="PDB" id="9G8M">
    <property type="method" value="EM"/>
    <property type="resolution" value="3.30 A"/>
    <property type="chains" value="SX=1-143"/>
</dbReference>
<dbReference type="PDB" id="9G8O">
    <property type="method" value="EM"/>
    <property type="resolution" value="3.40 A"/>
    <property type="chains" value="SX=1-143"/>
</dbReference>
<dbReference type="PDBsum" id="4CXG"/>
<dbReference type="PDBsum" id="4CXH"/>
<dbReference type="PDBsum" id="4UG0"/>
<dbReference type="PDBsum" id="4V6X"/>
<dbReference type="PDBsum" id="5A2Q"/>
<dbReference type="PDBsum" id="5AJ0"/>
<dbReference type="PDBsum" id="5FLX"/>
<dbReference type="PDBsum" id="5LKS"/>
<dbReference type="PDBsum" id="5OA3"/>
<dbReference type="PDBsum" id="5T2C"/>
<dbReference type="PDBsum" id="5VYC"/>
<dbReference type="PDBsum" id="6FEC"/>
<dbReference type="PDBsum" id="6G18"/>
<dbReference type="PDBsum" id="6G4S"/>
<dbReference type="PDBsum" id="6G4W"/>
<dbReference type="PDBsum" id="6G51"/>
<dbReference type="PDBsum" id="6G53"/>
<dbReference type="PDBsum" id="6G5H"/>
<dbReference type="PDBsum" id="6G5I"/>
<dbReference type="PDBsum" id="6IP5"/>
<dbReference type="PDBsum" id="6IP6"/>
<dbReference type="PDBsum" id="6IP8"/>
<dbReference type="PDBsum" id="6OLE"/>
<dbReference type="PDBsum" id="6OLF"/>
<dbReference type="PDBsum" id="6OLG"/>
<dbReference type="PDBsum" id="6OLI"/>
<dbReference type="PDBsum" id="6OLZ"/>
<dbReference type="PDBsum" id="6OM0"/>
<dbReference type="PDBsum" id="6OM7"/>
<dbReference type="PDBsum" id="6QZP"/>
<dbReference type="PDBsum" id="6XA1"/>
<dbReference type="PDBsum" id="6Y0G"/>
<dbReference type="PDBsum" id="6Y2L"/>
<dbReference type="PDBsum" id="6Y57"/>
<dbReference type="PDBsum" id="6YBW"/>
<dbReference type="PDBsum" id="6Z6L"/>
<dbReference type="PDBsum" id="6Z6M"/>
<dbReference type="PDBsum" id="6Z6N"/>
<dbReference type="PDBsum" id="6ZLW"/>
<dbReference type="PDBsum" id="6ZM7"/>
<dbReference type="PDBsum" id="6ZME"/>
<dbReference type="PDBsum" id="6ZMI"/>
<dbReference type="PDBsum" id="6ZMO"/>
<dbReference type="PDBsum" id="6ZMT"/>
<dbReference type="PDBsum" id="6ZMW"/>
<dbReference type="PDBsum" id="6ZN5"/>
<dbReference type="PDBsum" id="6ZOJ"/>
<dbReference type="PDBsum" id="6ZOK"/>
<dbReference type="PDBsum" id="6ZON"/>
<dbReference type="PDBsum" id="6ZP4"/>
<dbReference type="PDBsum" id="6ZUO"/>
<dbReference type="PDBsum" id="6ZV6"/>
<dbReference type="PDBsum" id="6ZVH"/>
<dbReference type="PDBsum" id="6ZVJ"/>
<dbReference type="PDBsum" id="6ZXD"/>
<dbReference type="PDBsum" id="6ZXE"/>
<dbReference type="PDBsum" id="6ZXF"/>
<dbReference type="PDBsum" id="6ZXG"/>
<dbReference type="PDBsum" id="6ZXH"/>
<dbReference type="PDBsum" id="7A09"/>
<dbReference type="PDBsum" id="7K5I"/>
<dbReference type="PDBsum" id="7MQ8"/>
<dbReference type="PDBsum" id="7MQ9"/>
<dbReference type="PDBsum" id="7MQA"/>
<dbReference type="PDBsum" id="7QP6"/>
<dbReference type="PDBsum" id="7QP7"/>
<dbReference type="PDBsum" id="7R4X"/>
<dbReference type="PDBsum" id="7TQL"/>
<dbReference type="PDBsum" id="7WTS"/>
<dbReference type="PDBsum" id="7WTT"/>
<dbReference type="PDBsum" id="7WTU"/>
<dbReference type="PDBsum" id="7WTV"/>
<dbReference type="PDBsum" id="7WTW"/>
<dbReference type="PDBsum" id="7WTX"/>
<dbReference type="PDBsum" id="7WTZ"/>
<dbReference type="PDBsum" id="7WU0"/>
<dbReference type="PDBsum" id="7XNX"/>
<dbReference type="PDBsum" id="7XNY"/>
<dbReference type="PDBsum" id="8IFD"/>
<dbReference type="PDBsum" id="8IFE"/>
<dbReference type="PDBsum" id="8JDJ"/>
<dbReference type="PDBsum" id="8JDK"/>
<dbReference type="PDBsum" id="8JDL"/>
<dbReference type="PDBsum" id="8JDM"/>
<dbReference type="PDBsum" id="8K2C"/>
<dbReference type="PDBsum" id="8OZ0"/>
<dbReference type="PDBsum" id="8PJ1"/>
<dbReference type="PDBsum" id="8PJ2"/>
<dbReference type="PDBsum" id="8PJ3"/>
<dbReference type="PDBsum" id="8PJ4"/>
<dbReference type="PDBsum" id="8PJ5"/>
<dbReference type="PDBsum" id="8PJ6"/>
<dbReference type="PDBsum" id="8PPK"/>
<dbReference type="PDBsum" id="8QOI"/>
<dbReference type="PDBsum" id="8T4S"/>
<dbReference type="PDBsum" id="8UKB"/>
<dbReference type="PDBsum" id="8XP2"/>
<dbReference type="PDBsum" id="8XP3"/>
<dbReference type="PDBsum" id="8XSX"/>
<dbReference type="PDBsum" id="8XSY"/>
<dbReference type="PDBsum" id="8XSZ"/>
<dbReference type="PDBsum" id="8XXL"/>
<dbReference type="PDBsum" id="8XXM"/>
<dbReference type="PDBsum" id="8XXN"/>
<dbReference type="PDBsum" id="8Y0W"/>
<dbReference type="PDBsum" id="8Y0X"/>
<dbReference type="PDBsum" id="8YOO"/>
<dbReference type="PDBsum" id="8YOP"/>
<dbReference type="PDBsum" id="8ZDB"/>
<dbReference type="PDBsum" id="8ZDC"/>
<dbReference type="PDBsum" id="8ZDD"/>
<dbReference type="PDBsum" id="9BKD"/>
<dbReference type="PDBsum" id="9BLN"/>
<dbReference type="PDBsum" id="9C3H"/>
<dbReference type="PDBsum" id="9G8M"/>
<dbReference type="PDBsum" id="9G8O"/>
<dbReference type="EMDB" id="EMD-10668"/>
<dbReference type="EMDB" id="EMD-10674"/>
<dbReference type="EMDB" id="EMD-10690"/>
<dbReference type="EMDB" id="EMD-10775"/>
<dbReference type="EMDB" id="EMD-11098"/>
<dbReference type="EMDB" id="EMD-11099"/>
<dbReference type="EMDB" id="EMD-11100"/>
<dbReference type="EMDB" id="EMD-11276"/>
<dbReference type="EMDB" id="EMD-11288"/>
<dbReference type="EMDB" id="EMD-11289"/>
<dbReference type="EMDB" id="EMD-11292"/>
<dbReference type="EMDB" id="EMD-11299"/>
<dbReference type="EMDB" id="EMD-11301"/>
<dbReference type="EMDB" id="EMD-11302"/>
<dbReference type="EMDB" id="EMD-11310"/>
<dbReference type="EMDB" id="EMD-11320"/>
<dbReference type="EMDB" id="EMD-11321"/>
<dbReference type="EMDB" id="EMD-11325"/>
<dbReference type="EMDB" id="EMD-11335"/>
<dbReference type="EMDB" id="EMD-11440"/>
<dbReference type="EMDB" id="EMD-11441"/>
<dbReference type="EMDB" id="EMD-11456"/>
<dbReference type="EMDB" id="EMD-11458"/>
<dbReference type="EMDB" id="EMD-11517"/>
<dbReference type="EMDB" id="EMD-11518"/>
<dbReference type="EMDB" id="EMD-11519"/>
<dbReference type="EMDB" id="EMD-11520"/>
<dbReference type="EMDB" id="EMD-11521"/>
<dbReference type="EMDB" id="EMD-11602"/>
<dbReference type="EMDB" id="EMD-14113"/>
<dbReference type="EMDB" id="EMD-14114"/>
<dbReference type="EMDB" id="EMD-17297"/>
<dbReference type="EMDB" id="EMD-17696"/>
<dbReference type="EMDB" id="EMD-17697"/>
<dbReference type="EMDB" id="EMD-17698"/>
<dbReference type="EMDB" id="EMD-17699"/>
<dbReference type="EMDB" id="EMD-17700"/>
<dbReference type="EMDB" id="EMD-17701"/>
<dbReference type="EMDB" id="EMD-18539"/>
<dbReference type="EMDB" id="EMD-22681"/>
<dbReference type="EMDB" id="EMD-23936"/>
<dbReference type="EMDB" id="EMD-23937"/>
<dbReference type="EMDB" id="EMD-23938"/>
<dbReference type="EMDB" id="EMD-26067"/>
<dbReference type="EMDB" id="EMD-29757"/>
<dbReference type="EMDB" id="EMD-29758"/>
<dbReference type="EMDB" id="EMD-29759"/>
<dbReference type="EMDB" id="EMD-29760"/>
<dbReference type="EMDB" id="EMD-29771"/>
<dbReference type="EMDB" id="EMD-32799"/>
<dbReference type="EMDB" id="EMD-32800"/>
<dbReference type="EMDB" id="EMD-32801"/>
<dbReference type="EMDB" id="EMD-32802"/>
<dbReference type="EMDB" id="EMD-32803"/>
<dbReference type="EMDB" id="EMD-32804"/>
<dbReference type="EMDB" id="EMD-32806"/>
<dbReference type="EMDB" id="EMD-32807"/>
<dbReference type="EMDB" id="EMD-33329"/>
<dbReference type="EMDB" id="EMD-33330"/>
<dbReference type="EMDB" id="EMD-35413"/>
<dbReference type="EMDB" id="EMD-35414"/>
<dbReference type="EMDB" id="EMD-36178"/>
<dbReference type="EMDB" id="EMD-36179"/>
<dbReference type="EMDB" id="EMD-36180"/>
<dbReference type="EMDB" id="EMD-36181"/>
<dbReference type="EMDB" id="EMD-36838"/>
<dbReference type="EMDB" id="EMD-3770"/>
<dbReference type="EMDB" id="EMD-38548"/>
<dbReference type="EMDB" id="EMD-38549"/>
<dbReference type="EMDB" id="EMD-38629"/>
<dbReference type="EMDB" id="EMD-38630"/>
<dbReference type="EMDB" id="EMD-38631"/>
<dbReference type="EMDB" id="EMD-38752"/>
<dbReference type="EMDB" id="EMD-38753"/>
<dbReference type="EMDB" id="EMD-38754"/>
<dbReference type="EMDB" id="EMD-3883"/>
<dbReference type="EMDB" id="EMD-39455"/>
<dbReference type="EMDB" id="EMD-39456"/>
<dbReference type="EMDB" id="EMD-39956"/>
<dbReference type="EMDB" id="EMD-39957"/>
<dbReference type="EMDB" id="EMD-39958"/>
<dbReference type="EMDB" id="EMD-4070"/>
<dbReference type="EMDB" id="EMD-41039"/>
<dbReference type="EMDB" id="EMD-42351"/>
<dbReference type="EMDB" id="EMD-4242"/>
<dbReference type="EMDB" id="EMD-4337"/>
<dbReference type="EMDB" id="EMD-4348"/>
<dbReference type="EMDB" id="EMD-4349"/>
<dbReference type="EMDB" id="EMD-4350"/>
<dbReference type="EMDB" id="EMD-4351"/>
<dbReference type="EMDB" id="EMD-4352"/>
<dbReference type="EMDB" id="EMD-4353"/>
<dbReference type="EMDB" id="EMD-44641"/>
<dbReference type="EMDB" id="EMD-44671"/>
<dbReference type="EMDB" id="EMD-45170"/>
<dbReference type="EMDB" id="EMD-51132"/>
<dbReference type="EMDB" id="EMD-51134"/>
<dbReference type="EMDB" id="EMD-9701"/>
<dbReference type="EMDB" id="EMD-9702"/>
<dbReference type="EMDB" id="EMD-9703"/>
<dbReference type="SMR" id="P62266"/>
<dbReference type="BioGRID" id="112142">
    <property type="interactions" value="383"/>
</dbReference>
<dbReference type="ComplexPortal" id="CPX-5223">
    <property type="entry name" value="40S cytosolic small ribosomal subunit"/>
</dbReference>
<dbReference type="CORUM" id="P62266"/>
<dbReference type="FunCoup" id="P62266">
    <property type="interactions" value="2370"/>
</dbReference>
<dbReference type="IntAct" id="P62266">
    <property type="interactions" value="127"/>
</dbReference>
<dbReference type="MINT" id="P62266"/>
<dbReference type="STRING" id="9606.ENSP00000296674"/>
<dbReference type="GlyGen" id="P62266">
    <property type="glycosylation" value="2 sites, 1 N-linked glycan (1 site), 1 O-linked glycan (1 site)"/>
</dbReference>
<dbReference type="iPTMnet" id="P62266"/>
<dbReference type="PhosphoSitePlus" id="P62266"/>
<dbReference type="SwissPalm" id="P62266"/>
<dbReference type="BioMuta" id="RPS23"/>
<dbReference type="DMDM" id="50403755"/>
<dbReference type="jPOST" id="P62266"/>
<dbReference type="MassIVE" id="P62266"/>
<dbReference type="PaxDb" id="9606-ENSP00000296674"/>
<dbReference type="PeptideAtlas" id="P62266"/>
<dbReference type="ProteomicsDB" id="57380"/>
<dbReference type="Pumba" id="P62266"/>
<dbReference type="TopDownProteomics" id="P62266"/>
<dbReference type="Antibodypedia" id="24716">
    <property type="antibodies" value="143 antibodies from 22 providers"/>
</dbReference>
<dbReference type="DNASU" id="6228"/>
<dbReference type="Ensembl" id="ENST00000296674.13">
    <property type="protein sequence ID" value="ENSP00000296674.8"/>
    <property type="gene ID" value="ENSG00000186468.13"/>
</dbReference>
<dbReference type="Ensembl" id="ENST00000651545.1">
    <property type="protein sequence ID" value="ENSP00000498621.1"/>
    <property type="gene ID" value="ENSG00000186468.13"/>
</dbReference>
<dbReference type="GeneID" id="6228"/>
<dbReference type="KEGG" id="hsa:6228"/>
<dbReference type="MANE-Select" id="ENST00000296674.13">
    <property type="protein sequence ID" value="ENSP00000296674.8"/>
    <property type="RefSeq nucleotide sequence ID" value="NM_001025.5"/>
    <property type="RefSeq protein sequence ID" value="NP_001016.1"/>
</dbReference>
<dbReference type="UCSC" id="uc003khu.4">
    <property type="organism name" value="human"/>
</dbReference>
<dbReference type="AGR" id="HGNC:10410"/>
<dbReference type="CTD" id="6228"/>
<dbReference type="DisGeNET" id="6228"/>
<dbReference type="GeneCards" id="RPS23"/>
<dbReference type="HGNC" id="HGNC:10410">
    <property type="gene designation" value="RPS23"/>
</dbReference>
<dbReference type="HPA" id="ENSG00000186468">
    <property type="expression patterns" value="Low tissue specificity"/>
</dbReference>
<dbReference type="MalaCards" id="RPS23"/>
<dbReference type="MIM" id="603683">
    <property type="type" value="gene"/>
</dbReference>
<dbReference type="MIM" id="617412">
    <property type="type" value="phenotype"/>
</dbReference>
<dbReference type="neXtProt" id="NX_P62266"/>
<dbReference type="OpenTargets" id="ENSG00000186468"/>
<dbReference type="PharmGKB" id="PA34813"/>
<dbReference type="VEuPathDB" id="HostDB:ENSG00000186468"/>
<dbReference type="eggNOG" id="KOG1749">
    <property type="taxonomic scope" value="Eukaryota"/>
</dbReference>
<dbReference type="GeneTree" id="ENSGT00550000074784"/>
<dbReference type="HOGENOM" id="CLU_115574_0_1_1"/>
<dbReference type="InParanoid" id="P62266"/>
<dbReference type="OMA" id="KFRWSQR"/>
<dbReference type="OrthoDB" id="9758353at2759"/>
<dbReference type="PAN-GO" id="P62266">
    <property type="GO annotations" value="4 GO annotations based on evolutionary models"/>
</dbReference>
<dbReference type="PhylomeDB" id="P62266"/>
<dbReference type="TreeFam" id="TF300871"/>
<dbReference type="PathwayCommons" id="P62266"/>
<dbReference type="Reactome" id="R-HSA-156827">
    <property type="pathway name" value="L13a-mediated translational silencing of Ceruloplasmin expression"/>
</dbReference>
<dbReference type="Reactome" id="R-HSA-156902">
    <property type="pathway name" value="Peptide chain elongation"/>
</dbReference>
<dbReference type="Reactome" id="R-HSA-1799339">
    <property type="pathway name" value="SRP-dependent cotranslational protein targeting to membrane"/>
</dbReference>
<dbReference type="Reactome" id="R-HSA-192823">
    <property type="pathway name" value="Viral mRNA Translation"/>
</dbReference>
<dbReference type="Reactome" id="R-HSA-2408557">
    <property type="pathway name" value="Selenocysteine synthesis"/>
</dbReference>
<dbReference type="Reactome" id="R-HSA-6791226">
    <property type="pathway name" value="Major pathway of rRNA processing in the nucleolus and cytosol"/>
</dbReference>
<dbReference type="Reactome" id="R-HSA-72649">
    <property type="pathway name" value="Translation initiation complex formation"/>
</dbReference>
<dbReference type="Reactome" id="R-HSA-72689">
    <property type="pathway name" value="Formation of a pool of free 40S subunits"/>
</dbReference>
<dbReference type="Reactome" id="R-HSA-72695">
    <property type="pathway name" value="Formation of the ternary complex, and subsequently, the 43S complex"/>
</dbReference>
<dbReference type="Reactome" id="R-HSA-72702">
    <property type="pathway name" value="Ribosomal scanning and start codon recognition"/>
</dbReference>
<dbReference type="Reactome" id="R-HSA-72706">
    <property type="pathway name" value="GTP hydrolysis and joining of the 60S ribosomal subunit"/>
</dbReference>
<dbReference type="Reactome" id="R-HSA-72764">
    <property type="pathway name" value="Eukaryotic Translation Termination"/>
</dbReference>
<dbReference type="Reactome" id="R-HSA-9010553">
    <property type="pathway name" value="Regulation of expression of SLITs and ROBOs"/>
</dbReference>
<dbReference type="Reactome" id="R-HSA-9629569">
    <property type="pathway name" value="Protein hydroxylation"/>
</dbReference>
<dbReference type="Reactome" id="R-HSA-9633012">
    <property type="pathway name" value="Response of EIF2AK4 (GCN2) to amino acid deficiency"/>
</dbReference>
<dbReference type="Reactome" id="R-HSA-9735869">
    <property type="pathway name" value="SARS-CoV-1 modulates host translation machinery"/>
</dbReference>
<dbReference type="Reactome" id="R-HSA-9754678">
    <property type="pathway name" value="SARS-CoV-2 modulates host translation machinery"/>
</dbReference>
<dbReference type="Reactome" id="R-HSA-975956">
    <property type="pathway name" value="Nonsense Mediated Decay (NMD) independent of the Exon Junction Complex (EJC)"/>
</dbReference>
<dbReference type="Reactome" id="R-HSA-975957">
    <property type="pathway name" value="Nonsense Mediated Decay (NMD) enhanced by the Exon Junction Complex (EJC)"/>
</dbReference>
<dbReference type="SignaLink" id="P62266"/>
<dbReference type="SIGNOR" id="P62266"/>
<dbReference type="BioGRID-ORCS" id="6228">
    <property type="hits" value="827 hits in 1134 CRISPR screens"/>
</dbReference>
<dbReference type="CD-CODE" id="91857CE7">
    <property type="entry name" value="Nucleolus"/>
</dbReference>
<dbReference type="ChiTaRS" id="RPS23">
    <property type="organism name" value="human"/>
</dbReference>
<dbReference type="EvolutionaryTrace" id="P62266"/>
<dbReference type="GeneWiki" id="RPS23"/>
<dbReference type="GenomeRNAi" id="6228"/>
<dbReference type="Pharos" id="P62266">
    <property type="development level" value="Tbio"/>
</dbReference>
<dbReference type="PRO" id="PR:P62266"/>
<dbReference type="Proteomes" id="UP000005640">
    <property type="component" value="Chromosome 5"/>
</dbReference>
<dbReference type="RNAct" id="P62266">
    <property type="molecule type" value="protein"/>
</dbReference>
<dbReference type="Bgee" id="ENSG00000186468">
    <property type="expression patterns" value="Expressed in skin of hip and 214 other cell types or tissues"/>
</dbReference>
<dbReference type="ExpressionAtlas" id="P62266">
    <property type="expression patterns" value="baseline and differential"/>
</dbReference>
<dbReference type="GO" id="GO:0005737">
    <property type="term" value="C:cytoplasm"/>
    <property type="evidence" value="ECO:0000303"/>
    <property type="project" value="ComplexPortal"/>
</dbReference>
<dbReference type="GO" id="GO:0005829">
    <property type="term" value="C:cytosol"/>
    <property type="evidence" value="ECO:0000314"/>
    <property type="project" value="HPA"/>
</dbReference>
<dbReference type="GO" id="GO:0022626">
    <property type="term" value="C:cytosolic ribosome"/>
    <property type="evidence" value="ECO:0000314"/>
    <property type="project" value="FlyBase"/>
</dbReference>
<dbReference type="GO" id="GO:0022627">
    <property type="term" value="C:cytosolic small ribosomal subunit"/>
    <property type="evidence" value="ECO:0000314"/>
    <property type="project" value="UniProtKB"/>
</dbReference>
<dbReference type="GO" id="GO:0005783">
    <property type="term" value="C:endoplasmic reticulum"/>
    <property type="evidence" value="ECO:0000314"/>
    <property type="project" value="HPA"/>
</dbReference>
<dbReference type="GO" id="GO:0016020">
    <property type="term" value="C:membrane"/>
    <property type="evidence" value="ECO:0007005"/>
    <property type="project" value="UniProtKB"/>
</dbReference>
<dbReference type="GO" id="GO:0005730">
    <property type="term" value="C:nucleolus"/>
    <property type="evidence" value="ECO:0007669"/>
    <property type="project" value="UniProtKB-SubCell"/>
</dbReference>
<dbReference type="GO" id="GO:0005654">
    <property type="term" value="C:nucleoplasm"/>
    <property type="evidence" value="ECO:0000304"/>
    <property type="project" value="Reactome"/>
</dbReference>
<dbReference type="GO" id="GO:0005840">
    <property type="term" value="C:ribosome"/>
    <property type="evidence" value="ECO:0000318"/>
    <property type="project" value="GO_Central"/>
</dbReference>
<dbReference type="GO" id="GO:0005791">
    <property type="term" value="C:rough endoplasmic reticulum"/>
    <property type="evidence" value="ECO:0007669"/>
    <property type="project" value="UniProtKB-SubCell"/>
</dbReference>
<dbReference type="GO" id="GO:0032040">
    <property type="term" value="C:small-subunit processome"/>
    <property type="evidence" value="ECO:0000314"/>
    <property type="project" value="UniProtKB"/>
</dbReference>
<dbReference type="GO" id="GO:0045202">
    <property type="term" value="C:synapse"/>
    <property type="evidence" value="ECO:0007669"/>
    <property type="project" value="Ensembl"/>
</dbReference>
<dbReference type="GO" id="GO:0003723">
    <property type="term" value="F:RNA binding"/>
    <property type="evidence" value="ECO:0007005"/>
    <property type="project" value="UniProtKB"/>
</dbReference>
<dbReference type="GO" id="GO:0003735">
    <property type="term" value="F:structural constituent of ribosome"/>
    <property type="evidence" value="ECO:0000314"/>
    <property type="project" value="FlyBase"/>
</dbReference>
<dbReference type="GO" id="GO:0002181">
    <property type="term" value="P:cytoplasmic translation"/>
    <property type="evidence" value="ECO:0000314"/>
    <property type="project" value="UniProtKB"/>
</dbReference>
<dbReference type="GO" id="GO:1990145">
    <property type="term" value="P:maintenance of translational fidelity"/>
    <property type="evidence" value="ECO:0000315"/>
    <property type="project" value="UniProtKB"/>
</dbReference>
<dbReference type="GO" id="GO:0042274">
    <property type="term" value="P:ribosomal small subunit biogenesis"/>
    <property type="evidence" value="ECO:0000314"/>
    <property type="project" value="UniProtKB"/>
</dbReference>
<dbReference type="GO" id="GO:0034063">
    <property type="term" value="P:stress granule assembly"/>
    <property type="evidence" value="ECO:0000315"/>
    <property type="project" value="UniProtKB"/>
</dbReference>
<dbReference type="GO" id="GO:0006412">
    <property type="term" value="P:translation"/>
    <property type="evidence" value="ECO:0000315"/>
    <property type="project" value="UniProtKB"/>
</dbReference>
<dbReference type="CDD" id="cd03367">
    <property type="entry name" value="Ribosomal_S23"/>
    <property type="match status" value="1"/>
</dbReference>
<dbReference type="FunFam" id="2.40.50.140:FF:000007">
    <property type="entry name" value="40S ribosomal protein S23"/>
    <property type="match status" value="1"/>
</dbReference>
<dbReference type="Gene3D" id="2.40.50.140">
    <property type="entry name" value="Nucleic acid-binding proteins"/>
    <property type="match status" value="1"/>
</dbReference>
<dbReference type="InterPro" id="IPR012340">
    <property type="entry name" value="NA-bd_OB-fold"/>
</dbReference>
<dbReference type="InterPro" id="IPR006032">
    <property type="entry name" value="Ribosomal_uS12"/>
</dbReference>
<dbReference type="InterPro" id="IPR005680">
    <property type="entry name" value="Ribosomal_uS12_euk/arc"/>
</dbReference>
<dbReference type="NCBIfam" id="NF003254">
    <property type="entry name" value="PRK04211.1"/>
    <property type="match status" value="1"/>
</dbReference>
<dbReference type="NCBIfam" id="TIGR00982">
    <property type="entry name" value="uS12_E_A"/>
    <property type="match status" value="1"/>
</dbReference>
<dbReference type="PANTHER" id="PTHR11652">
    <property type="entry name" value="30S RIBOSOMAL PROTEIN S12 FAMILY MEMBER"/>
    <property type="match status" value="1"/>
</dbReference>
<dbReference type="Pfam" id="PF00164">
    <property type="entry name" value="Ribosom_S12_S23"/>
    <property type="match status" value="1"/>
</dbReference>
<dbReference type="PIRSF" id="PIRSF002133">
    <property type="entry name" value="Ribosomal_S12/S23"/>
    <property type="match status" value="1"/>
</dbReference>
<dbReference type="SUPFAM" id="SSF50249">
    <property type="entry name" value="Nucleic acid-binding proteins"/>
    <property type="match status" value="1"/>
</dbReference>
<dbReference type="PROSITE" id="PS00055">
    <property type="entry name" value="RIBOSOMAL_S12"/>
    <property type="match status" value="1"/>
</dbReference>
<gene>
    <name type="primary">RPS23</name>
</gene>
<sequence length="143" mass="15808">MGKCRGLRTARKLRSHRRDQKWHDKQYKKAHLGTALKANPFGGASHAKGIVLEKVGVEAKQPNSAIRKCVRVQLIKNGKKITAFVPNDGCLNFIEENDEVLVAGFGRKGHAVGDIPGVRFKVVKVANVSLLALYKGKKERPRS</sequence>
<reference key="1">
    <citation type="journal article" date="1993" name="Nucleic Acids Res.">
        <title>A cDNA sequence of human ribosomal protein, homologue of yeast S28.</title>
        <authorList>
            <person name="Hori N."/>
            <person name="Murakawa K."/>
            <person name="Matoba R."/>
            <person name="Fukushima A."/>
            <person name="Okubo K."/>
            <person name="Matsubara K."/>
        </authorList>
    </citation>
    <scope>NUCLEOTIDE SEQUENCE [MRNA]</scope>
</reference>
<reference key="2">
    <citation type="submission" date="2004-06" db="EMBL/GenBank/DDBJ databases">
        <title>Cloning of human full open reading frames in Gateway(TM) system entry vector (pDONR201).</title>
        <authorList>
            <person name="Ebert L."/>
            <person name="Schick M."/>
            <person name="Neubert P."/>
            <person name="Schatten R."/>
            <person name="Henze S."/>
            <person name="Korn B."/>
        </authorList>
    </citation>
    <scope>NUCLEOTIDE SEQUENCE [LARGE SCALE MRNA]</scope>
</reference>
<reference key="3">
    <citation type="journal article" date="2004" name="Genome Res.">
        <title>The status, quality, and expansion of the NIH full-length cDNA project: the Mammalian Gene Collection (MGC).</title>
        <authorList>
            <consortium name="The MGC Project Team"/>
        </authorList>
    </citation>
    <scope>NUCLEOTIDE SEQUENCE [LARGE SCALE MRNA]</scope>
    <source>
        <tissue>Testis</tissue>
    </source>
</reference>
<reference key="4">
    <citation type="journal article" date="1996" name="Eur. J. Biochem.">
        <title>Characterization of the human small-ribosomal-subunit proteins by N-terminal and internal sequencing, and mass spectrometry.</title>
        <authorList>
            <person name="Vladimirov S.N."/>
            <person name="Ivanov A.V."/>
            <person name="Karpova G.G."/>
            <person name="Musolyamov A.K."/>
            <person name="Egorov T.A."/>
            <person name="Thiede B."/>
            <person name="Wittmann-Liebold B."/>
            <person name="Otto A."/>
        </authorList>
    </citation>
    <scope>PROTEIN SEQUENCE OF 2-10</scope>
    <source>
        <tissue>Placenta</tissue>
    </source>
</reference>
<reference key="5">
    <citation type="journal article" date="1998" name="Genome Res.">
        <title>A map of 75 human ribosomal protein genes.</title>
        <authorList>
            <person name="Kenmochi N."/>
            <person name="Kawaguchi T."/>
            <person name="Rozen S."/>
            <person name="Davis E."/>
            <person name="Goodman N."/>
            <person name="Hudson T.J."/>
            <person name="Tanaka T."/>
            <person name="Page D.C."/>
        </authorList>
    </citation>
    <scope>NUCLEOTIDE SEQUENCE [GENOMIC DNA] OF 84-142</scope>
</reference>
<reference key="6">
    <citation type="journal article" date="2009" name="Science">
        <title>Lysine acetylation targets protein complexes and co-regulates major cellular functions.</title>
        <authorList>
            <person name="Choudhary C."/>
            <person name="Kumar C."/>
            <person name="Gnad F."/>
            <person name="Nielsen M.L."/>
            <person name="Rehman M."/>
            <person name="Walther T.C."/>
            <person name="Olsen J.V."/>
            <person name="Mann M."/>
        </authorList>
    </citation>
    <scope>ACETYLATION [LARGE SCALE ANALYSIS] AT LYS-135</scope>
    <scope>IDENTIFICATION BY MASS SPECTROMETRY [LARGE SCALE ANALYSIS]</scope>
</reference>
<reference key="7">
    <citation type="journal article" date="2011" name="BMC Syst. Biol.">
        <title>Initial characterization of the human central proteome.</title>
        <authorList>
            <person name="Burkard T.R."/>
            <person name="Planyavsky M."/>
            <person name="Kaupe I."/>
            <person name="Breitwieser F.P."/>
            <person name="Buerckstuemmer T."/>
            <person name="Bennett K.L."/>
            <person name="Superti-Furga G."/>
            <person name="Colinge J."/>
        </authorList>
    </citation>
    <scope>IDENTIFICATION BY MASS SPECTROMETRY [LARGE SCALE ANALYSIS]</scope>
</reference>
<reference key="8">
    <citation type="journal article" date="2014" name="Curr. Opin. Struct. Biol.">
        <title>A new system for naming ribosomal proteins.</title>
        <authorList>
            <person name="Ban N."/>
            <person name="Beckmann R."/>
            <person name="Cate J.H.D."/>
            <person name="Dinman J.D."/>
            <person name="Dragon F."/>
            <person name="Ellis S.R."/>
            <person name="Lafontaine D.L.J."/>
            <person name="Lindahl L."/>
            <person name="Liljas A."/>
            <person name="Lipton J.M."/>
            <person name="McAlear M.A."/>
            <person name="Moore P.B."/>
            <person name="Noller H.F."/>
            <person name="Ortega J."/>
            <person name="Panse V.G."/>
            <person name="Ramakrishnan V."/>
            <person name="Spahn C.M.T."/>
            <person name="Steitz T.A."/>
            <person name="Tchorzewski M."/>
            <person name="Tollervey D."/>
            <person name="Warren A.J."/>
            <person name="Williamson J.R."/>
            <person name="Wilson D."/>
            <person name="Yonath A."/>
            <person name="Yusupov M."/>
        </authorList>
    </citation>
    <scope>NOMENCLATURE</scope>
</reference>
<reference key="9">
    <citation type="journal article" date="2014" name="Proc. Natl. Acad. Sci. U.S.A.">
        <title>Hydroxylation of the eukaryotic ribosomal decoding center affects translational accuracy.</title>
        <authorList>
            <person name="Loenarz C."/>
            <person name="Sekirnik R."/>
            <person name="Thalhammer A."/>
            <person name="Ge W."/>
            <person name="Spivakovsky E."/>
            <person name="Mackeen M.M."/>
            <person name="McDonough M.A."/>
            <person name="Cockman M.E."/>
            <person name="Kessler B.M."/>
            <person name="Ratcliffe P.J."/>
            <person name="Wolf A."/>
            <person name="Schofield C.J."/>
        </authorList>
    </citation>
    <scope>HYDROXYLATION AT PRO-62</scope>
</reference>
<reference key="10">
    <citation type="journal article" date="2014" name="Proc. Natl. Acad. Sci. U.S.A.">
        <title>OGFOD1 catalyzes prolyl hydroxylation of RPS23 and is involved in translation control and stress granule formation.</title>
        <authorList>
            <person name="Singleton R.S."/>
            <person name="Liu-Yi P."/>
            <person name="Formenti F."/>
            <person name="Ge W."/>
            <person name="Sekirnik R."/>
            <person name="Fischer R."/>
            <person name="Adam J."/>
            <person name="Pollard P.J."/>
            <person name="Wolf A."/>
            <person name="Thalhammer A."/>
            <person name="Loenarz C."/>
            <person name="Flashman E."/>
            <person name="Yamamoto A."/>
            <person name="Coleman M.L."/>
            <person name="Kessler B.M."/>
            <person name="Wappner P."/>
            <person name="Schofield C.J."/>
            <person name="Ratcliffe P.J."/>
            <person name="Cockman M.E."/>
        </authorList>
    </citation>
    <scope>HYDROXYLATION AT PRO-62</scope>
</reference>
<reference key="11">
    <citation type="journal article" date="2015" name="Proteomics">
        <title>N-terminome analysis of the human mitochondrial proteome.</title>
        <authorList>
            <person name="Vaca Jacome A.S."/>
            <person name="Rabilloud T."/>
            <person name="Schaeffer-Reiss C."/>
            <person name="Rompais M."/>
            <person name="Ayoub D."/>
            <person name="Lane L."/>
            <person name="Bairoch A."/>
            <person name="Van Dorsselaer A."/>
            <person name="Carapito C."/>
        </authorList>
    </citation>
    <scope>IDENTIFICATION BY MASS SPECTROMETRY [LARGE SCALE ANALYSIS]</scope>
</reference>
<reference key="12">
    <citation type="journal article" date="2017" name="Am. J. Hum. Genet.">
        <title>A ribosomopathy reveals decoding defective ribosomes driving human dysmorphism.</title>
        <authorList>
            <person name="Paolini N.A."/>
            <person name="Attwood M."/>
            <person name="Sondalle S.B."/>
            <person name="Vieira C.M."/>
            <person name="van Adrichem A.M."/>
            <person name="di Summa F.M."/>
            <person name="O'Donohue M.F."/>
            <person name="Gleizes P.E."/>
            <person name="Rachuri S."/>
            <person name="Briggs J.W."/>
            <person name="Fischer R."/>
            <person name="Ratcliffe P.J."/>
            <person name="Wlodarski M.W."/>
            <person name="Houtkooper R.H."/>
            <person name="von Lindern M."/>
            <person name="Kuijpers T.W."/>
            <person name="Dinman J.D."/>
            <person name="Baserga S.J."/>
            <person name="Cockman M.E."/>
            <person name="MacInnes A.W."/>
        </authorList>
    </citation>
    <scope>FUNCTION</scope>
    <scope>HYDROXYLATION AT PRO-62</scope>
    <scope>INVOLVEMENT IN BTDD</scope>
    <scope>VARIANTS BTDD LYS-67 AND ILE-120</scope>
    <scope>CHARACTERIZATION OF VARIANTS BTDD LYS-67 AND ILE-120</scope>
</reference>
<reference key="13">
    <citation type="journal article" date="2017" name="Nat. Struct. Mol. Biol.">
        <title>Site-specific mapping of the human SUMO proteome reveals co-modification with phosphorylation.</title>
        <authorList>
            <person name="Hendriks I.A."/>
            <person name="Lyon D."/>
            <person name="Young C."/>
            <person name="Jensen L.J."/>
            <person name="Vertegaal A.C."/>
            <person name="Nielsen M.L."/>
        </authorList>
    </citation>
    <scope>SUMOYLATION [LARGE SCALE ANALYSIS] AT LYS-37</scope>
    <scope>IDENTIFICATION BY MASS SPECTROMETRY [LARGE SCALE ANALYSIS]</scope>
</reference>
<reference key="14">
    <citation type="journal article" date="2013" name="Nature">
        <title>Structures of the human and Drosophila 80S ribosome.</title>
        <authorList>
            <person name="Anger A.M."/>
            <person name="Armache J.P."/>
            <person name="Berninghausen O."/>
            <person name="Habeck M."/>
            <person name="Subklewe M."/>
            <person name="Wilson D.N."/>
            <person name="Beckmann R."/>
        </authorList>
    </citation>
    <scope>STRUCTURE BY ELECTRON MICROSCOPY (5.0 ANGSTROMS)</scope>
    <scope>FUNCTION</scope>
    <scope>SUBCELLULAR LOCATION</scope>
    <scope>SUBUNIT</scope>
</reference>
<reference evidence="17" key="15">
    <citation type="journal article" date="2015" name="Cell">
        <title>Structural snapshots of actively translating human ribosomes.</title>
        <authorList>
            <person name="Behrmann E."/>
            <person name="Loerke J."/>
            <person name="Budkevich T.V."/>
            <person name="Yamamoto K."/>
            <person name="Schmidt A."/>
            <person name="Penczek P.A."/>
            <person name="Vos M.R."/>
            <person name="Burger J."/>
            <person name="Mielke T."/>
            <person name="Scheerer P."/>
            <person name="Spahn C.M."/>
        </authorList>
    </citation>
    <scope>STRUCTURE BY ELECTRON MICROSCOPY (3.50 ANGSTROMS)</scope>
    <scope>FUNCTION</scope>
    <scope>SUBCELLULAR LOCATION</scope>
    <scope>SUBUNIT</scope>
</reference>
<reference evidence="16" key="16">
    <citation type="journal article" date="2015" name="Nature">
        <title>Structure of the human 80S ribosome.</title>
        <authorList>
            <person name="Khatter H."/>
            <person name="Myasnikov A.G."/>
            <person name="Natchiar S.K."/>
            <person name="Klaholz B.P."/>
        </authorList>
    </citation>
    <scope>STRUCTURE BY ELECTRON MICROSCOPY (3.60 ANGSTROMS)</scope>
    <scope>FUNCTION</scope>
    <scope>SUBCELLULAR LOCATION</scope>
    <scope>SUBUNIT</scope>
</reference>
<reference evidence="18 19 20" key="17">
    <citation type="journal article" date="2021" name="Science">
        <title>Nucleolar maturation of the human small subunit processome.</title>
        <authorList>
            <person name="Singh S."/>
            <person name="Vanden Broeck A."/>
            <person name="Miller L."/>
            <person name="Chaker-Margot M."/>
            <person name="Klinge S."/>
        </authorList>
    </citation>
    <scope>STRUCTURE BY ELECTRON MICROSCOPY (2.70 ANGSTROMS)</scope>
    <scope>FUNCTION</scope>
    <scope>SUBUNIT</scope>
    <scope>SUBCELLULAR LOCATION</scope>
</reference>
<protein>
    <recommendedName>
        <fullName evidence="12">Small ribosomal subunit protein uS12</fullName>
    </recommendedName>
    <alternativeName>
        <fullName>40S ribosomal protein S23</fullName>
    </alternativeName>
</protein>
<accession>P62266</accession>
<accession>P39028</accession>
<accession>Q6IB08</accession>
<feature type="initiator methionine" description="Removed" evidence="11">
    <location>
        <position position="1"/>
    </location>
</feature>
<feature type="chain" id="PRO_0000146457" description="Small ribosomal subunit protein uS12">
    <location>
        <begin position="2"/>
        <end position="143"/>
    </location>
</feature>
<feature type="region of interest" description="Disordered" evidence="3">
    <location>
        <begin position="1"/>
        <end position="26"/>
    </location>
</feature>
<feature type="compositionally biased region" description="Basic residues" evidence="3">
    <location>
        <begin position="1"/>
        <end position="20"/>
    </location>
</feature>
<feature type="modified residue" description="N6-succinyllysine" evidence="1">
    <location>
        <position position="54"/>
    </location>
</feature>
<feature type="modified residue" description="3-hydroxyproline" evidence="5 6 9">
    <location>
        <position position="62"/>
    </location>
</feature>
<feature type="modified residue" description="N6-acetyllysine" evidence="21">
    <location>
        <position position="135"/>
    </location>
</feature>
<feature type="cross-link" description="Glycyl lysine isopeptide (Lys-Gly) (interchain with G-Cter in SUMO2)" evidence="22">
    <location>
        <position position="37"/>
    </location>
</feature>
<feature type="sequence variant" id="VAR_079133" description="In BTDD; decreases hydroxylation of the protein; decreases the accuracy of translation; decreases levels of incorporation of the mutant protein into ribosomes and polysomes; patient cells become highly sensitive to oxidative stress; dbSNP:rs1060505034." evidence="9">
    <original>R</original>
    <variation>K</variation>
    <location>
        <position position="67"/>
    </location>
</feature>
<feature type="sequence variant" id="VAR_079134" description="In BTDD; decreases hydroxylation of the protein; decreases the accuracy of translation; decreases levels of incorporation of the mutant protein into polysomes; patient cells become highly sensitive to oxidative stress; dbSNP:rs1060505035." evidence="9">
    <original>F</original>
    <variation>I</variation>
    <location>
        <position position="120"/>
    </location>
</feature>
<feature type="helix" evidence="25">
    <location>
        <begin position="10"/>
        <end position="21"/>
    </location>
</feature>
<feature type="helix" evidence="25">
    <location>
        <begin position="25"/>
        <end position="31"/>
    </location>
</feature>
<feature type="helix" evidence="25">
    <location>
        <begin position="34"/>
        <end position="38"/>
    </location>
</feature>
<feature type="turn" evidence="25">
    <location>
        <begin position="40"/>
        <end position="43"/>
    </location>
</feature>
<feature type="strand" evidence="25">
    <location>
        <begin position="45"/>
        <end position="58"/>
    </location>
</feature>
<feature type="strand" evidence="23">
    <location>
        <begin position="61"/>
        <end position="63"/>
    </location>
</feature>
<feature type="strand" evidence="25">
    <location>
        <begin position="66"/>
        <end position="74"/>
    </location>
</feature>
<feature type="turn" evidence="25">
    <location>
        <begin position="75"/>
        <end position="77"/>
    </location>
</feature>
<feature type="strand" evidence="25">
    <location>
        <begin position="80"/>
        <end position="84"/>
    </location>
</feature>
<feature type="strand" evidence="24">
    <location>
        <begin position="87"/>
        <end position="89"/>
    </location>
</feature>
<feature type="helix" evidence="25">
    <location>
        <begin position="90"/>
        <end position="93"/>
    </location>
</feature>
<feature type="strand" evidence="25">
    <location>
        <begin position="99"/>
        <end position="104"/>
    </location>
</feature>
<feature type="strand" evidence="23">
    <location>
        <begin position="106"/>
        <end position="110"/>
    </location>
</feature>
<feature type="strand" evidence="26">
    <location>
        <begin position="113"/>
        <end position="115"/>
    </location>
</feature>
<feature type="strand" evidence="25">
    <location>
        <begin position="120"/>
        <end position="125"/>
    </location>
</feature>
<feature type="helix" evidence="25">
    <location>
        <begin position="130"/>
        <end position="134"/>
    </location>
</feature>
<organism>
    <name type="scientific">Homo sapiens</name>
    <name type="common">Human</name>
    <dbReference type="NCBI Taxonomy" id="9606"/>
    <lineage>
        <taxon>Eukaryota</taxon>
        <taxon>Metazoa</taxon>
        <taxon>Chordata</taxon>
        <taxon>Craniata</taxon>
        <taxon>Vertebrata</taxon>
        <taxon>Euteleostomi</taxon>
        <taxon>Mammalia</taxon>
        <taxon>Eutheria</taxon>
        <taxon>Euarchontoglires</taxon>
        <taxon>Primates</taxon>
        <taxon>Haplorrhini</taxon>
        <taxon>Catarrhini</taxon>
        <taxon>Hominidae</taxon>
        <taxon>Homo</taxon>
    </lineage>
</organism>
<evidence type="ECO:0000250" key="1">
    <source>
        <dbReference type="UniProtKB" id="P62267"/>
    </source>
</evidence>
<evidence type="ECO:0000250" key="2">
    <source>
        <dbReference type="UniProtKB" id="Q6SA96"/>
    </source>
</evidence>
<evidence type="ECO:0000256" key="3">
    <source>
        <dbReference type="SAM" id="MobiDB-lite"/>
    </source>
</evidence>
<evidence type="ECO:0000269" key="4">
    <source>
    </source>
</evidence>
<evidence type="ECO:0000269" key="5">
    <source>
    </source>
</evidence>
<evidence type="ECO:0000269" key="6">
    <source>
    </source>
</evidence>
<evidence type="ECO:0000269" key="7">
    <source>
    </source>
</evidence>
<evidence type="ECO:0000269" key="8">
    <source>
    </source>
</evidence>
<evidence type="ECO:0000269" key="9">
    <source>
    </source>
</evidence>
<evidence type="ECO:0000269" key="10">
    <source>
    </source>
</evidence>
<evidence type="ECO:0000269" key="11">
    <source>
    </source>
</evidence>
<evidence type="ECO:0000303" key="12">
    <source>
    </source>
</evidence>
<evidence type="ECO:0000305" key="13"/>
<evidence type="ECO:0000305" key="14">
    <source>
    </source>
</evidence>
<evidence type="ECO:0000305" key="15">
    <source>
    </source>
</evidence>
<evidence type="ECO:0007744" key="16">
    <source>
        <dbReference type="PDB" id="4UG0"/>
    </source>
</evidence>
<evidence type="ECO:0007744" key="17">
    <source>
        <dbReference type="PDB" id="5AJ0"/>
    </source>
</evidence>
<evidence type="ECO:0007744" key="18">
    <source>
        <dbReference type="PDB" id="7MQ8"/>
    </source>
</evidence>
<evidence type="ECO:0007744" key="19">
    <source>
        <dbReference type="PDB" id="7MQ9"/>
    </source>
</evidence>
<evidence type="ECO:0007744" key="20">
    <source>
        <dbReference type="PDB" id="7MQA"/>
    </source>
</evidence>
<evidence type="ECO:0007744" key="21">
    <source>
    </source>
</evidence>
<evidence type="ECO:0007744" key="22">
    <source>
    </source>
</evidence>
<evidence type="ECO:0007829" key="23">
    <source>
        <dbReference type="PDB" id="6ZLW"/>
    </source>
</evidence>
<evidence type="ECO:0007829" key="24">
    <source>
        <dbReference type="PDB" id="6ZOJ"/>
    </source>
</evidence>
<evidence type="ECO:0007829" key="25">
    <source>
        <dbReference type="PDB" id="7R4X"/>
    </source>
</evidence>
<evidence type="ECO:0007829" key="26">
    <source>
        <dbReference type="PDB" id="7WTU"/>
    </source>
</evidence>
<name>RS23_HUMAN</name>
<comment type="function">
    <text evidence="4 7 8 9 10">Component of the ribosome, a large ribonucleoprotein complex responsible for the synthesis of proteins in the cell (PubMed:23636399, PubMed:25901680, PubMed:25957688, PubMed:28257692). The small ribosomal subunit (SSU) binds messenger RNAs (mRNAs) and translates the encoded message by selecting cognate aminoacyl-transfer RNA (tRNA) molecules (PubMed:23636399, PubMed:25901680, PubMed:25957688). The large subunit (LSU) contains the ribosomal catalytic site termed the peptidyl transferase center (PTC), which catalyzes the formation of peptide bonds, thereby polymerizing the amino acids delivered by tRNAs into a polypeptide chain (PubMed:23636399, PubMed:25901680, PubMed:25957688). The nascent polypeptides leave the ribosome through a tunnel in the LSU and interact with protein factors that function in enzymatic processing, targeting, and the membrane insertion of nascent chains at the exit of the ribosomal tunnel (PubMed:23636399, PubMed:25901680, PubMed:25957688). Plays an important role in translational accuracy (PubMed:28257692). Part of the small subunit (SSU) processome, first precursor of the small eukaryotic ribosomal subunit. During the assembly of the SSU processome in the nucleolus, many ribosome biogenesis factors, an RNA chaperone and ribosomal proteins associate with the nascent pre-rRNA and work in concert to generate RNA folding, modifications, rearrangements and cleavage as well as targeted degradation of pre-ribosomal RNA by the RNA exosome (PubMed:34516797).</text>
</comment>
<comment type="subunit">
    <text evidence="4 7 8 10">Component of the 40S small ribosomal subunit (PubMed:23636399, PubMed:25901680, PubMed:25957688). Part of the small subunit (SSU) processome, composed of more than 70 proteins and the RNA chaperone small nucleolar RNA (snoRNA) U3 (PubMed:34516797).</text>
</comment>
<comment type="interaction">
    <interactant intactId="EBI-353072">
        <id>P62266</id>
    </interactant>
    <interactant intactId="EBI-1222919">
        <id>P43146</id>
        <label>DCC</label>
    </interactant>
    <organismsDiffer>false</organismsDiffer>
    <experiments>2</experiments>
</comment>
<comment type="interaction">
    <interactant intactId="EBI-353072">
        <id>P62266</id>
    </interactant>
    <interactant intactId="EBI-5323863">
        <id>Q5S007</id>
        <label>LRRK2</label>
    </interactant>
    <organismsDiffer>false</organismsDiffer>
    <experiments>2</experiments>
</comment>
<comment type="interaction">
    <interactant intactId="EBI-353072">
        <id>P62266</id>
    </interactant>
    <interactant intactId="EBI-13327083">
        <id>Q8N543</id>
        <label>OGFOD1</label>
    </interactant>
    <organismsDiffer>false</organismsDiffer>
    <experiments>3</experiments>
</comment>
<comment type="interaction">
    <interactant intactId="EBI-353072">
        <id>P62266</id>
    </interactant>
    <interactant intactId="EBI-358018">
        <id>P46777</id>
        <label>RPL5</label>
    </interactant>
    <organismsDiffer>false</organismsDiffer>
    <experiments>2</experiments>
</comment>
<comment type="subcellular location">
    <subcellularLocation>
        <location evidence="8">Cytoplasm</location>
        <location evidence="8">Cytosol</location>
    </subcellularLocation>
    <subcellularLocation>
        <location evidence="14 15">Cytoplasm</location>
    </subcellularLocation>
    <subcellularLocation>
        <location evidence="2">Rough endoplasmic reticulum</location>
    </subcellularLocation>
    <subcellularLocation>
        <location evidence="10">Nucleus</location>
        <location evidence="10">Nucleolus</location>
    </subcellularLocation>
    <text evidence="2 8">Detected on cytosolic polysomes (PubMed:25957688). Detected in ribosomes that are associated with the rough endoplasmic reticulum (By similarity).</text>
</comment>
<comment type="PTM">
    <text evidence="5 6 9">Hydroxylation at Pro-62 affects translation termination efficiency.</text>
</comment>
<comment type="disease" evidence="9">
    <disease id="DI-04991">
        <name>Brachycephaly, trichomegaly, and developmental delay</name>
        <acronym>BTDD</acronym>
        <description>An autosomal dominant developmental disorder characterized by brachycephaly, ciliary trichomegaly, dysmorphic features of the face and hands, hearing loss, and developmental delay with short stature. Intellectual disability and autism spectrum disorder may be present in some patients.</description>
        <dbReference type="MIM" id="617412"/>
    </disease>
    <text>The disease is caused by variants affecting the gene represented in this entry.</text>
</comment>
<comment type="similarity">
    <text evidence="13">Belongs to the universal ribosomal protein uS12 family.</text>
</comment>
<keyword id="KW-0002">3D-structure</keyword>
<keyword id="KW-0007">Acetylation</keyword>
<keyword id="KW-0963">Cytoplasm</keyword>
<keyword id="KW-0209">Deafness</keyword>
<keyword id="KW-0903">Direct protein sequencing</keyword>
<keyword id="KW-0225">Disease variant</keyword>
<keyword id="KW-0242">Dwarfism</keyword>
<keyword id="KW-0256">Endoplasmic reticulum</keyword>
<keyword id="KW-0379">Hydroxylation</keyword>
<keyword id="KW-1017">Isopeptide bond</keyword>
<keyword id="KW-0539">Nucleus</keyword>
<keyword id="KW-1267">Proteomics identification</keyword>
<keyword id="KW-1185">Reference proteome</keyword>
<keyword id="KW-0687">Ribonucleoprotein</keyword>
<keyword id="KW-0689">Ribosomal protein</keyword>
<keyword id="KW-0832">Ubl conjugation</keyword>
<proteinExistence type="evidence at protein level"/>